<reference key="1">
    <citation type="journal article" date="1994" name="Insect Biochem. Mol. Biol.">
        <title>Characterization of a cDNA and gene encoding a cuticular protein from rigid cuticles of the giant silkmoth, Hyalophora cecropia.</title>
        <authorList>
            <person name="Lampe D.J."/>
            <person name="Willis J.H."/>
        </authorList>
    </citation>
    <scope>NUCLEOTIDE SEQUENCE [GENOMIC DNA]</scope>
    <scope>PROTEIN SEQUENCE OF 18-43 AND 78-108</scope>
    <source>
        <tissue>Epidermis</tissue>
    </source>
</reference>
<comment type="function">
    <text>Component of the rigid cuticle of the larva and pupa of Hyalophora cecropia.</text>
</comment>
<comment type="tissue specificity">
    <text>Expressed in larval wing disc, forewing disc, diapausing wing, adult wing, and in very low amounts in fat body and testes.</text>
</comment>
<comment type="developmental stage">
    <text>Mostly present in young pupal wings and larval tubercles. Faintly present in younger than 24 hours old pupal forewing and hindwing. Weakly detected in hindwing and tubercles.</text>
</comment>
<organism>
    <name type="scientific">Hyalophora cecropia</name>
    <name type="common">Cecropia moth</name>
    <name type="synonym">Samia cecropia</name>
    <dbReference type="NCBI Taxonomy" id="7123"/>
    <lineage>
        <taxon>Eukaryota</taxon>
        <taxon>Metazoa</taxon>
        <taxon>Ecdysozoa</taxon>
        <taxon>Arthropoda</taxon>
        <taxon>Hexapoda</taxon>
        <taxon>Insecta</taxon>
        <taxon>Pterygota</taxon>
        <taxon>Neoptera</taxon>
        <taxon>Endopterygota</taxon>
        <taxon>Lepidoptera</taxon>
        <taxon>Glossata</taxon>
        <taxon>Ditrysia</taxon>
        <taxon>Bombycoidea</taxon>
        <taxon>Saturniidae</taxon>
        <taxon>Saturniinae</taxon>
        <taxon>Attacini</taxon>
        <taxon>Hyalophora</taxon>
    </lineage>
</organism>
<protein>
    <recommendedName>
        <fullName>Larval/pupal rigid cuticle protein 66</fullName>
    </recommendedName>
    <alternativeName>
        <fullName>HCCP66</fullName>
    </alternativeName>
</protein>
<keyword id="KW-0193">Cuticle</keyword>
<keyword id="KW-0903">Direct protein sequencing</keyword>
<keyword id="KW-0732">Signal</keyword>
<dbReference type="EMBL" id="L13971">
    <property type="protein sequence ID" value="AAC37204.1"/>
    <property type="molecule type" value="Genomic_DNA"/>
</dbReference>
<dbReference type="GO" id="GO:0031012">
    <property type="term" value="C:extracellular matrix"/>
    <property type="evidence" value="ECO:0007669"/>
    <property type="project" value="TreeGrafter"/>
</dbReference>
<dbReference type="GO" id="GO:0005615">
    <property type="term" value="C:extracellular space"/>
    <property type="evidence" value="ECO:0007669"/>
    <property type="project" value="TreeGrafter"/>
</dbReference>
<dbReference type="GO" id="GO:0042302">
    <property type="term" value="F:structural constituent of cuticle"/>
    <property type="evidence" value="ECO:0007669"/>
    <property type="project" value="UniProtKB-KW"/>
</dbReference>
<dbReference type="InterPro" id="IPR031311">
    <property type="entry name" value="CHIT_BIND_RR_consensus"/>
</dbReference>
<dbReference type="InterPro" id="IPR000618">
    <property type="entry name" value="Insect_cuticle"/>
</dbReference>
<dbReference type="InterPro" id="IPR051217">
    <property type="entry name" value="Insect_Cuticle_Struc_Prot"/>
</dbReference>
<dbReference type="PANTHER" id="PTHR12236:SF75">
    <property type="entry name" value="CUTICULAR PROTEIN 62BB, ISOFORM A"/>
    <property type="match status" value="1"/>
</dbReference>
<dbReference type="PANTHER" id="PTHR12236">
    <property type="entry name" value="STRUCTURAL CONTITUENT OF CUTICLE"/>
    <property type="match status" value="1"/>
</dbReference>
<dbReference type="Pfam" id="PF00379">
    <property type="entry name" value="Chitin_bind_4"/>
    <property type="match status" value="1"/>
</dbReference>
<dbReference type="PROSITE" id="PS00233">
    <property type="entry name" value="CHIT_BIND_RR_1"/>
    <property type="match status" value="1"/>
</dbReference>
<dbReference type="PROSITE" id="PS51155">
    <property type="entry name" value="CHIT_BIND_RR_2"/>
    <property type="match status" value="1"/>
</dbReference>
<accession>P45590</accession>
<feature type="signal peptide" evidence="2">
    <location>
        <begin position="1"/>
        <end position="17"/>
    </location>
</feature>
<feature type="chain" id="PRO_0000006386" description="Larval/pupal rigid cuticle protein 66">
    <location>
        <begin position="18"/>
        <end position="129"/>
    </location>
</feature>
<feature type="domain" description="Chitin-binding type R&amp;R" evidence="1">
    <location>
        <begin position="18"/>
        <end position="90"/>
    </location>
</feature>
<feature type="sequence conflict" description="In Ref. 1; AA sequence." evidence="3" ref="1">
    <original>Y</original>
    <variation>F</variation>
    <location>
        <position position="105"/>
    </location>
</feature>
<feature type="sequence conflict" description="In Ref. 1; AA sequence." evidence="3" ref="1">
    <original>S</original>
    <variation>F</variation>
    <location>
        <position position="108"/>
    </location>
</feature>
<evidence type="ECO:0000255" key="1">
    <source>
        <dbReference type="PROSITE-ProRule" id="PRU00497"/>
    </source>
</evidence>
<evidence type="ECO:0000269" key="2">
    <source>
    </source>
</evidence>
<evidence type="ECO:0000305" key="3"/>
<sequence length="129" mass="13878">MLVKFVACFVFVAVASASDFSSFSYGVADPSTGDFKSQIESRLGDNVQGQYSLLESDGTQRTVDYAAGSEGFNAVVRKDPALIAAAPYITAPYGYAVPYAYTSPYGISNLANYRALKFASALPYSRVFF</sequence>
<name>CU66_HYACE</name>
<proteinExistence type="evidence at protein level"/>
<gene>
    <name type="primary">CP66</name>
</gene>